<sequence length="277" mass="30123">MEPKAFVEIMRPHNCILAGIVGILGSLVAYEGIPPVQKLILIFLVVYFGCSAGNTINDYFDVEIDKINRPNRPIPRGAITRKAAFYYGVLQYFIGLIIALLLGWSAFLFALGAYFLTFVYAWKLKPLPFIGNVTVALLTAATPIYGAVGVGRIDLAGYLAICAFLVNVSREIMKDIEDFEGDKRLGARTLPIMIGKKKSGIIASIFGFLTIISSFLPVKVGIGLGYLPIIIVDIMIAKASIDVLVNPEKAGKGQKILKFATFIAVISFLLGALTREV</sequence>
<name>DGGGP_PYRHO</name>
<comment type="function">
    <text evidence="1">Prenyltransferase that catalyzes the transfer of the geranylgeranyl moiety of geranylgeranyl diphosphate (GGPP) to the C2 hydroxyl of (S)-3-O-geranylgeranylglyceryl phosphate (GGGP). This reaction is the second ether-bond-formation step in the biosynthesis of archaeal membrane lipids.</text>
</comment>
<comment type="catalytic activity">
    <reaction evidence="1">
        <text>sn-3-O-(geranylgeranyl)glycerol 1-phosphate + (2E,6E,10E)-geranylgeranyl diphosphate = 2,3-bis-O-(geranylgeranyl)-sn-glycerol 1-phosphate + diphosphate</text>
        <dbReference type="Rhea" id="RHEA:18109"/>
        <dbReference type="ChEBI" id="CHEBI:33019"/>
        <dbReference type="ChEBI" id="CHEBI:57677"/>
        <dbReference type="ChEBI" id="CHEBI:58756"/>
        <dbReference type="ChEBI" id="CHEBI:58837"/>
        <dbReference type="EC" id="2.5.1.42"/>
    </reaction>
</comment>
<comment type="cofactor">
    <cofactor evidence="1">
        <name>Mg(2+)</name>
        <dbReference type="ChEBI" id="CHEBI:18420"/>
    </cofactor>
</comment>
<comment type="pathway">
    <text evidence="1">Membrane lipid metabolism; glycerophospholipid metabolism.</text>
</comment>
<comment type="subcellular location">
    <subcellularLocation>
        <location evidence="1">Cell membrane</location>
        <topology evidence="1">Multi-pass membrane protein</topology>
    </subcellularLocation>
</comment>
<comment type="similarity">
    <text evidence="1">Belongs to the UbiA prenyltransferase family. DGGGP synthase subfamily.</text>
</comment>
<keyword id="KW-1003">Cell membrane</keyword>
<keyword id="KW-0444">Lipid biosynthesis</keyword>
<keyword id="KW-0443">Lipid metabolism</keyword>
<keyword id="KW-0460">Magnesium</keyword>
<keyword id="KW-0472">Membrane</keyword>
<keyword id="KW-0594">Phospholipid biosynthesis</keyword>
<keyword id="KW-1208">Phospholipid metabolism</keyword>
<keyword id="KW-0808">Transferase</keyword>
<keyword id="KW-0812">Transmembrane</keyword>
<keyword id="KW-1133">Transmembrane helix</keyword>
<protein>
    <recommendedName>
        <fullName evidence="1">Digeranylgeranylglyceryl phosphate synthase</fullName>
        <shortName evidence="1">DGGGP synthase</shortName>
        <shortName evidence="1">DGGGPS</shortName>
        <ecNumber evidence="1">2.5.1.42</ecNumber>
    </recommendedName>
    <alternativeName>
        <fullName evidence="1">(S)-2,3-di-O-geranylgeranylglyceryl phosphate synthase</fullName>
    </alternativeName>
    <alternativeName>
        <fullName evidence="1">Geranylgeranylglycerol-phosphate geranylgeranyltransferase</fullName>
    </alternativeName>
</protein>
<proteinExistence type="inferred from homology"/>
<feature type="chain" id="PRO_0000350717" description="Digeranylgeranylglyceryl phosphate synthase">
    <location>
        <begin position="1"/>
        <end position="277"/>
    </location>
</feature>
<feature type="transmembrane region" description="Helical" evidence="1">
    <location>
        <begin position="16"/>
        <end position="36"/>
    </location>
</feature>
<feature type="transmembrane region" description="Helical" evidence="1">
    <location>
        <begin position="40"/>
        <end position="60"/>
    </location>
</feature>
<feature type="transmembrane region" description="Helical" evidence="1">
    <location>
        <begin position="93"/>
        <end position="113"/>
    </location>
</feature>
<feature type="transmembrane region" description="Helical" evidence="1">
    <location>
        <begin position="129"/>
        <end position="149"/>
    </location>
</feature>
<feature type="transmembrane region" description="Helical" evidence="1">
    <location>
        <begin position="153"/>
        <end position="173"/>
    </location>
</feature>
<feature type="transmembrane region" description="Helical" evidence="1">
    <location>
        <begin position="199"/>
        <end position="218"/>
    </location>
</feature>
<feature type="transmembrane region" description="Helical" evidence="1">
    <location>
        <begin position="222"/>
        <end position="244"/>
    </location>
</feature>
<feature type="transmembrane region" description="Helical" evidence="1">
    <location>
        <begin position="253"/>
        <end position="273"/>
    </location>
</feature>
<gene>
    <name type="ordered locus">PH0027</name>
</gene>
<evidence type="ECO:0000255" key="1">
    <source>
        <dbReference type="HAMAP-Rule" id="MF_01286"/>
    </source>
</evidence>
<organism>
    <name type="scientific">Pyrococcus horikoshii (strain ATCC 700860 / DSM 12428 / JCM 9974 / NBRC 100139 / OT-3)</name>
    <dbReference type="NCBI Taxonomy" id="70601"/>
    <lineage>
        <taxon>Archaea</taxon>
        <taxon>Methanobacteriati</taxon>
        <taxon>Methanobacteriota</taxon>
        <taxon>Thermococci</taxon>
        <taxon>Thermococcales</taxon>
        <taxon>Thermococcaceae</taxon>
        <taxon>Pyrococcus</taxon>
    </lineage>
</organism>
<accession>O57753</accession>
<reference key="1">
    <citation type="journal article" date="1998" name="DNA Res.">
        <title>Complete sequence and gene organization of the genome of a hyper-thermophilic archaebacterium, Pyrococcus horikoshii OT3.</title>
        <authorList>
            <person name="Kawarabayasi Y."/>
            <person name="Sawada M."/>
            <person name="Horikawa H."/>
            <person name="Haikawa Y."/>
            <person name="Hino Y."/>
            <person name="Yamamoto S."/>
            <person name="Sekine M."/>
            <person name="Baba S."/>
            <person name="Kosugi H."/>
            <person name="Hosoyama A."/>
            <person name="Nagai Y."/>
            <person name="Sakai M."/>
            <person name="Ogura K."/>
            <person name="Otsuka R."/>
            <person name="Nakazawa H."/>
            <person name="Takamiya M."/>
            <person name="Ohfuku Y."/>
            <person name="Funahashi T."/>
            <person name="Tanaka T."/>
            <person name="Kudoh Y."/>
            <person name="Yamazaki J."/>
            <person name="Kushida N."/>
            <person name="Oguchi A."/>
            <person name="Aoki K."/>
            <person name="Yoshizawa T."/>
            <person name="Nakamura Y."/>
            <person name="Robb F.T."/>
            <person name="Horikoshi K."/>
            <person name="Masuchi Y."/>
            <person name="Shizuya H."/>
            <person name="Kikuchi H."/>
        </authorList>
    </citation>
    <scope>NUCLEOTIDE SEQUENCE [LARGE SCALE GENOMIC DNA]</scope>
    <source>
        <strain>ATCC 700860 / DSM 12428 / JCM 9974 / NBRC 100139 / OT-3</strain>
    </source>
</reference>
<dbReference type="EC" id="2.5.1.42" evidence="1"/>
<dbReference type="EMBL" id="BA000001">
    <property type="protein sequence ID" value="BAA29095.1"/>
    <property type="molecule type" value="Genomic_DNA"/>
</dbReference>
<dbReference type="PIR" id="H71220">
    <property type="entry name" value="H71220"/>
</dbReference>
<dbReference type="RefSeq" id="WP_010884148.1">
    <property type="nucleotide sequence ID" value="NC_000961.1"/>
</dbReference>
<dbReference type="SMR" id="O57753"/>
<dbReference type="STRING" id="70601.gene:9376934"/>
<dbReference type="EnsemblBacteria" id="BAA29095">
    <property type="protein sequence ID" value="BAA29095"/>
    <property type="gene ID" value="BAA29095"/>
</dbReference>
<dbReference type="GeneID" id="1443930"/>
<dbReference type="KEGG" id="pho:PH0027"/>
<dbReference type="eggNOG" id="arCOG00476">
    <property type="taxonomic scope" value="Archaea"/>
</dbReference>
<dbReference type="OrthoDB" id="11851at2157"/>
<dbReference type="UniPathway" id="UPA00940"/>
<dbReference type="Proteomes" id="UP000000752">
    <property type="component" value="Chromosome"/>
</dbReference>
<dbReference type="GO" id="GO:0005886">
    <property type="term" value="C:plasma membrane"/>
    <property type="evidence" value="ECO:0007669"/>
    <property type="project" value="UniProtKB-SubCell"/>
</dbReference>
<dbReference type="GO" id="GO:0047295">
    <property type="term" value="F:geranylgeranylglycerol-phosphate geranylgeranyltransferase activity"/>
    <property type="evidence" value="ECO:0007669"/>
    <property type="project" value="UniProtKB-UniRule"/>
</dbReference>
<dbReference type="GO" id="GO:0000287">
    <property type="term" value="F:magnesium ion binding"/>
    <property type="evidence" value="ECO:0007669"/>
    <property type="project" value="UniProtKB-UniRule"/>
</dbReference>
<dbReference type="GO" id="GO:0046474">
    <property type="term" value="P:glycerophospholipid biosynthetic process"/>
    <property type="evidence" value="ECO:0007669"/>
    <property type="project" value="UniProtKB-UniRule"/>
</dbReference>
<dbReference type="CDD" id="cd13961">
    <property type="entry name" value="PT_UbiA_DGGGPS"/>
    <property type="match status" value="1"/>
</dbReference>
<dbReference type="Gene3D" id="1.10.357.140">
    <property type="entry name" value="UbiA prenyltransferase"/>
    <property type="match status" value="1"/>
</dbReference>
<dbReference type="Gene3D" id="1.20.120.1780">
    <property type="entry name" value="UbiA prenyltransferase"/>
    <property type="match status" value="1"/>
</dbReference>
<dbReference type="HAMAP" id="MF_01286">
    <property type="entry name" value="DGGGP_synth"/>
    <property type="match status" value="1"/>
</dbReference>
<dbReference type="InterPro" id="IPR023547">
    <property type="entry name" value="DGGGP_synth"/>
</dbReference>
<dbReference type="InterPro" id="IPR050475">
    <property type="entry name" value="Prenyltransferase_related"/>
</dbReference>
<dbReference type="InterPro" id="IPR000537">
    <property type="entry name" value="UbiA_prenyltransferase"/>
</dbReference>
<dbReference type="InterPro" id="IPR044878">
    <property type="entry name" value="UbiA_sf"/>
</dbReference>
<dbReference type="NCBIfam" id="NF009522">
    <property type="entry name" value="PRK12883.1"/>
    <property type="match status" value="1"/>
</dbReference>
<dbReference type="PANTHER" id="PTHR42723">
    <property type="entry name" value="CHLOROPHYLL SYNTHASE"/>
    <property type="match status" value="1"/>
</dbReference>
<dbReference type="PANTHER" id="PTHR42723:SF1">
    <property type="entry name" value="CHLOROPHYLL SYNTHASE, CHLOROPLASTIC"/>
    <property type="match status" value="1"/>
</dbReference>
<dbReference type="Pfam" id="PF01040">
    <property type="entry name" value="UbiA"/>
    <property type="match status" value="1"/>
</dbReference>